<comment type="function">
    <text evidence="1">Catalyzes the condensation of pantoate with beta-alanine in an ATP-dependent reaction via a pantoyl-adenylate intermediate.</text>
</comment>
<comment type="catalytic activity">
    <reaction evidence="1">
        <text>(R)-pantoate + beta-alanine + ATP = (R)-pantothenate + AMP + diphosphate + H(+)</text>
        <dbReference type="Rhea" id="RHEA:10912"/>
        <dbReference type="ChEBI" id="CHEBI:15378"/>
        <dbReference type="ChEBI" id="CHEBI:15980"/>
        <dbReference type="ChEBI" id="CHEBI:29032"/>
        <dbReference type="ChEBI" id="CHEBI:30616"/>
        <dbReference type="ChEBI" id="CHEBI:33019"/>
        <dbReference type="ChEBI" id="CHEBI:57966"/>
        <dbReference type="ChEBI" id="CHEBI:456215"/>
        <dbReference type="EC" id="6.3.2.1"/>
    </reaction>
</comment>
<comment type="pathway">
    <text evidence="1">Cofactor biosynthesis; (R)-pantothenate biosynthesis; (R)-pantothenate from (R)-pantoate and beta-alanine: step 1/1.</text>
</comment>
<comment type="subunit">
    <text evidence="1">Homodimer.</text>
</comment>
<comment type="subcellular location">
    <subcellularLocation>
        <location evidence="1">Cytoplasm</location>
    </subcellularLocation>
</comment>
<comment type="miscellaneous">
    <text evidence="1">The reaction proceeds by a bi uni uni bi ping pong mechanism.</text>
</comment>
<comment type="similarity">
    <text evidence="1">Belongs to the pantothenate synthetase family.</text>
</comment>
<protein>
    <recommendedName>
        <fullName evidence="1">Pantothenate synthetase</fullName>
        <shortName evidence="1">PS</shortName>
        <ecNumber evidence="1">6.3.2.1</ecNumber>
    </recommendedName>
    <alternativeName>
        <fullName evidence="1">Pantoate--beta-alanine ligase</fullName>
    </alternativeName>
    <alternativeName>
        <fullName evidence="1">Pantoate-activating enzyme</fullName>
    </alternativeName>
</protein>
<feature type="chain" id="PRO_1000076873" description="Pantothenate synthetase">
    <location>
        <begin position="1"/>
        <end position="281"/>
    </location>
</feature>
<feature type="active site" description="Proton donor" evidence="1">
    <location>
        <position position="36"/>
    </location>
</feature>
<feature type="binding site" evidence="1">
    <location>
        <begin position="29"/>
        <end position="36"/>
    </location>
    <ligand>
        <name>ATP</name>
        <dbReference type="ChEBI" id="CHEBI:30616"/>
    </ligand>
</feature>
<feature type="binding site" evidence="1">
    <location>
        <position position="60"/>
    </location>
    <ligand>
        <name>(R)-pantoate</name>
        <dbReference type="ChEBI" id="CHEBI:15980"/>
    </ligand>
</feature>
<feature type="binding site" evidence="1">
    <location>
        <position position="60"/>
    </location>
    <ligand>
        <name>beta-alanine</name>
        <dbReference type="ChEBI" id="CHEBI:57966"/>
    </ligand>
</feature>
<feature type="binding site" evidence="1">
    <location>
        <begin position="146"/>
        <end position="149"/>
    </location>
    <ligand>
        <name>ATP</name>
        <dbReference type="ChEBI" id="CHEBI:30616"/>
    </ligand>
</feature>
<feature type="binding site" evidence="1">
    <location>
        <position position="152"/>
    </location>
    <ligand>
        <name>(R)-pantoate</name>
        <dbReference type="ChEBI" id="CHEBI:15980"/>
    </ligand>
</feature>
<feature type="binding site" evidence="1">
    <location>
        <position position="175"/>
    </location>
    <ligand>
        <name>ATP</name>
        <dbReference type="ChEBI" id="CHEBI:30616"/>
    </ligand>
</feature>
<feature type="binding site" evidence="1">
    <location>
        <begin position="183"/>
        <end position="186"/>
    </location>
    <ligand>
        <name>ATP</name>
        <dbReference type="ChEBI" id="CHEBI:30616"/>
    </ligand>
</feature>
<keyword id="KW-0067">ATP-binding</keyword>
<keyword id="KW-0963">Cytoplasm</keyword>
<keyword id="KW-0436">Ligase</keyword>
<keyword id="KW-0547">Nucleotide-binding</keyword>
<keyword id="KW-0566">Pantothenate biosynthesis</keyword>
<keyword id="KW-1185">Reference proteome</keyword>
<sequence>MVVVKNIDEMKKICRELRKEKTIGFVPTMGYLHEGHLSLVRRSKKENDITVVSIFVNPTQFGPNEDYNSYPRNLNRDASLLEKEDVDYVFIPEIEQMYPKDYSTYINEEKLSRHLCGRSRPGHFRGVCTVVTKLFNIVKPNRAYFGQKDAQQFRVIRRMVRDLNMDVEVIECPIVREPDGLAMSSRNIYLSTEERNQALALNRSLKIAENLYRSGEKNTERMKEKIVQYLSSFDKIKIDYVEIVSEETLEPVEKIEGKVVVAIAAWVGKARLIDNTILGEI</sequence>
<accession>A8F7T6</accession>
<name>PANC_PSELT</name>
<reference key="1">
    <citation type="submission" date="2007-08" db="EMBL/GenBank/DDBJ databases">
        <title>Complete sequence of Thermotoga lettingae TMO.</title>
        <authorList>
            <consortium name="US DOE Joint Genome Institute"/>
            <person name="Copeland A."/>
            <person name="Lucas S."/>
            <person name="Lapidus A."/>
            <person name="Barry K."/>
            <person name="Glavina del Rio T."/>
            <person name="Dalin E."/>
            <person name="Tice H."/>
            <person name="Pitluck S."/>
            <person name="Foster B."/>
            <person name="Bruce D."/>
            <person name="Schmutz J."/>
            <person name="Larimer F."/>
            <person name="Land M."/>
            <person name="Hauser L."/>
            <person name="Kyrpides N."/>
            <person name="Mikhailova N."/>
            <person name="Nelson K."/>
            <person name="Gogarten J.P."/>
            <person name="Noll K."/>
            <person name="Richardson P."/>
        </authorList>
    </citation>
    <scope>NUCLEOTIDE SEQUENCE [LARGE SCALE GENOMIC DNA]</scope>
    <source>
        <strain>ATCC BAA-301 / DSM 14385 / NBRC 107922 / TMO</strain>
    </source>
</reference>
<organism>
    <name type="scientific">Pseudothermotoga lettingae (strain ATCC BAA-301 / DSM 14385 / NBRC 107922 / TMO)</name>
    <name type="common">Thermotoga lettingae</name>
    <dbReference type="NCBI Taxonomy" id="416591"/>
    <lineage>
        <taxon>Bacteria</taxon>
        <taxon>Thermotogati</taxon>
        <taxon>Thermotogota</taxon>
        <taxon>Thermotogae</taxon>
        <taxon>Thermotogales</taxon>
        <taxon>Thermotogaceae</taxon>
        <taxon>Pseudothermotoga</taxon>
    </lineage>
</organism>
<evidence type="ECO:0000255" key="1">
    <source>
        <dbReference type="HAMAP-Rule" id="MF_00158"/>
    </source>
</evidence>
<dbReference type="EC" id="6.3.2.1" evidence="1"/>
<dbReference type="EMBL" id="CP000812">
    <property type="protein sequence ID" value="ABV34220.1"/>
    <property type="molecule type" value="Genomic_DNA"/>
</dbReference>
<dbReference type="RefSeq" id="WP_012003696.1">
    <property type="nucleotide sequence ID" value="NC_009828.1"/>
</dbReference>
<dbReference type="SMR" id="A8F7T6"/>
<dbReference type="STRING" id="416591.Tlet_1666"/>
<dbReference type="KEGG" id="tle:Tlet_1666"/>
<dbReference type="eggNOG" id="COG0414">
    <property type="taxonomic scope" value="Bacteria"/>
</dbReference>
<dbReference type="HOGENOM" id="CLU_047148_0_0_0"/>
<dbReference type="OrthoDB" id="9773087at2"/>
<dbReference type="UniPathway" id="UPA00028">
    <property type="reaction ID" value="UER00005"/>
</dbReference>
<dbReference type="Proteomes" id="UP000002016">
    <property type="component" value="Chromosome"/>
</dbReference>
<dbReference type="GO" id="GO:0005829">
    <property type="term" value="C:cytosol"/>
    <property type="evidence" value="ECO:0007669"/>
    <property type="project" value="TreeGrafter"/>
</dbReference>
<dbReference type="GO" id="GO:0005524">
    <property type="term" value="F:ATP binding"/>
    <property type="evidence" value="ECO:0007669"/>
    <property type="project" value="UniProtKB-KW"/>
</dbReference>
<dbReference type="GO" id="GO:0004592">
    <property type="term" value="F:pantoate-beta-alanine ligase activity"/>
    <property type="evidence" value="ECO:0007669"/>
    <property type="project" value="UniProtKB-UniRule"/>
</dbReference>
<dbReference type="GO" id="GO:0015940">
    <property type="term" value="P:pantothenate biosynthetic process"/>
    <property type="evidence" value="ECO:0007669"/>
    <property type="project" value="UniProtKB-UniRule"/>
</dbReference>
<dbReference type="CDD" id="cd00560">
    <property type="entry name" value="PanC"/>
    <property type="match status" value="1"/>
</dbReference>
<dbReference type="FunFam" id="3.30.1300.10:FF:000001">
    <property type="entry name" value="Pantothenate synthetase"/>
    <property type="match status" value="1"/>
</dbReference>
<dbReference type="FunFam" id="3.40.50.620:FF:000013">
    <property type="entry name" value="Pantothenate synthetase"/>
    <property type="match status" value="1"/>
</dbReference>
<dbReference type="Gene3D" id="3.40.50.620">
    <property type="entry name" value="HUPs"/>
    <property type="match status" value="1"/>
</dbReference>
<dbReference type="Gene3D" id="3.30.1300.10">
    <property type="entry name" value="Pantoate-beta-alanine ligase, C-terminal domain"/>
    <property type="match status" value="1"/>
</dbReference>
<dbReference type="HAMAP" id="MF_00158">
    <property type="entry name" value="PanC"/>
    <property type="match status" value="1"/>
</dbReference>
<dbReference type="InterPro" id="IPR004821">
    <property type="entry name" value="Cyt_trans-like"/>
</dbReference>
<dbReference type="InterPro" id="IPR003721">
    <property type="entry name" value="Pantoate_ligase"/>
</dbReference>
<dbReference type="InterPro" id="IPR042176">
    <property type="entry name" value="Pantoate_ligase_C"/>
</dbReference>
<dbReference type="InterPro" id="IPR014729">
    <property type="entry name" value="Rossmann-like_a/b/a_fold"/>
</dbReference>
<dbReference type="NCBIfam" id="TIGR00125">
    <property type="entry name" value="cyt_tran_rel"/>
    <property type="match status" value="1"/>
</dbReference>
<dbReference type="NCBIfam" id="TIGR00018">
    <property type="entry name" value="panC"/>
    <property type="match status" value="1"/>
</dbReference>
<dbReference type="PANTHER" id="PTHR21299">
    <property type="entry name" value="CYTIDYLATE KINASE/PANTOATE-BETA-ALANINE LIGASE"/>
    <property type="match status" value="1"/>
</dbReference>
<dbReference type="PANTHER" id="PTHR21299:SF1">
    <property type="entry name" value="PANTOATE--BETA-ALANINE LIGASE"/>
    <property type="match status" value="1"/>
</dbReference>
<dbReference type="Pfam" id="PF02569">
    <property type="entry name" value="Pantoate_ligase"/>
    <property type="match status" value="1"/>
</dbReference>
<dbReference type="SUPFAM" id="SSF52374">
    <property type="entry name" value="Nucleotidylyl transferase"/>
    <property type="match status" value="1"/>
</dbReference>
<gene>
    <name evidence="1" type="primary">panC</name>
    <name type="ordered locus">Tlet_1666</name>
</gene>
<proteinExistence type="inferred from homology"/>